<reference key="1">
    <citation type="journal article" date="2012" name="Stand. Genomic Sci.">
        <title>Complete genome sequence of Polynucleobacter necessarius subsp. asymbioticus type strain (QLW-P1DMWA-1(T)).</title>
        <authorList>
            <person name="Meincke L."/>
            <person name="Copeland A."/>
            <person name="Lapidus A."/>
            <person name="Lucas S."/>
            <person name="Berry K.W."/>
            <person name="Del Rio T.G."/>
            <person name="Hammon N."/>
            <person name="Dalin E."/>
            <person name="Tice H."/>
            <person name="Pitluck S."/>
            <person name="Richardson P."/>
            <person name="Bruce D."/>
            <person name="Goodwin L."/>
            <person name="Han C."/>
            <person name="Tapia R."/>
            <person name="Detter J.C."/>
            <person name="Schmutz J."/>
            <person name="Brettin T."/>
            <person name="Larimer F."/>
            <person name="Land M."/>
            <person name="Hauser L."/>
            <person name="Kyrpides N.C."/>
            <person name="Ivanova N."/>
            <person name="Goker M."/>
            <person name="Woyke T."/>
            <person name="Wu Q.L."/>
            <person name="Pockl M."/>
            <person name="Hahn M.W."/>
            <person name="Klenk H.P."/>
        </authorList>
    </citation>
    <scope>NUCLEOTIDE SEQUENCE [LARGE SCALE GENOMIC DNA]</scope>
    <source>
        <strain>DSM 18221 / CIP 109841 / QLW-P1DMWA-1</strain>
    </source>
</reference>
<comment type="function">
    <text evidence="1">Catalyzes the attachment of serine to tRNA(Ser). Is also able to aminoacylate tRNA(Sec) with serine, to form the misacylated tRNA L-seryl-tRNA(Sec), which will be further converted into selenocysteinyl-tRNA(Sec).</text>
</comment>
<comment type="catalytic activity">
    <reaction evidence="1">
        <text>tRNA(Ser) + L-serine + ATP = L-seryl-tRNA(Ser) + AMP + diphosphate + H(+)</text>
        <dbReference type="Rhea" id="RHEA:12292"/>
        <dbReference type="Rhea" id="RHEA-COMP:9669"/>
        <dbReference type="Rhea" id="RHEA-COMP:9703"/>
        <dbReference type="ChEBI" id="CHEBI:15378"/>
        <dbReference type="ChEBI" id="CHEBI:30616"/>
        <dbReference type="ChEBI" id="CHEBI:33019"/>
        <dbReference type="ChEBI" id="CHEBI:33384"/>
        <dbReference type="ChEBI" id="CHEBI:78442"/>
        <dbReference type="ChEBI" id="CHEBI:78533"/>
        <dbReference type="ChEBI" id="CHEBI:456215"/>
        <dbReference type="EC" id="6.1.1.11"/>
    </reaction>
</comment>
<comment type="catalytic activity">
    <reaction evidence="1">
        <text>tRNA(Sec) + L-serine + ATP = L-seryl-tRNA(Sec) + AMP + diphosphate + H(+)</text>
        <dbReference type="Rhea" id="RHEA:42580"/>
        <dbReference type="Rhea" id="RHEA-COMP:9742"/>
        <dbReference type="Rhea" id="RHEA-COMP:10128"/>
        <dbReference type="ChEBI" id="CHEBI:15378"/>
        <dbReference type="ChEBI" id="CHEBI:30616"/>
        <dbReference type="ChEBI" id="CHEBI:33019"/>
        <dbReference type="ChEBI" id="CHEBI:33384"/>
        <dbReference type="ChEBI" id="CHEBI:78442"/>
        <dbReference type="ChEBI" id="CHEBI:78533"/>
        <dbReference type="ChEBI" id="CHEBI:456215"/>
        <dbReference type="EC" id="6.1.1.11"/>
    </reaction>
</comment>
<comment type="pathway">
    <text evidence="1">Aminoacyl-tRNA biosynthesis; selenocysteinyl-tRNA(Sec) biosynthesis; L-seryl-tRNA(Sec) from L-serine and tRNA(Sec): step 1/1.</text>
</comment>
<comment type="subunit">
    <text evidence="1">Homodimer. The tRNA molecule binds across the dimer.</text>
</comment>
<comment type="subcellular location">
    <subcellularLocation>
        <location evidence="1">Cytoplasm</location>
    </subcellularLocation>
</comment>
<comment type="domain">
    <text evidence="1">Consists of two distinct domains, a catalytic core and a N-terminal extension that is involved in tRNA binding.</text>
</comment>
<comment type="similarity">
    <text evidence="1">Belongs to the class-II aminoacyl-tRNA synthetase family. Type-1 seryl-tRNA synthetase subfamily.</text>
</comment>
<keyword id="KW-0030">Aminoacyl-tRNA synthetase</keyword>
<keyword id="KW-0067">ATP-binding</keyword>
<keyword id="KW-0963">Cytoplasm</keyword>
<keyword id="KW-0436">Ligase</keyword>
<keyword id="KW-0547">Nucleotide-binding</keyword>
<keyword id="KW-0648">Protein biosynthesis</keyword>
<keyword id="KW-1185">Reference proteome</keyword>
<protein>
    <recommendedName>
        <fullName evidence="1">Serine--tRNA ligase</fullName>
        <ecNumber evidence="1">6.1.1.11</ecNumber>
    </recommendedName>
    <alternativeName>
        <fullName evidence="1">Seryl-tRNA synthetase</fullName>
        <shortName evidence="1">SerRS</shortName>
    </alternativeName>
    <alternativeName>
        <fullName evidence="1">Seryl-tRNA(Ser/Sec) synthetase</fullName>
    </alternativeName>
</protein>
<dbReference type="EC" id="6.1.1.11" evidence="1"/>
<dbReference type="EMBL" id="CP000655">
    <property type="protein sequence ID" value="ABP33910.1"/>
    <property type="molecule type" value="Genomic_DNA"/>
</dbReference>
<dbReference type="RefSeq" id="WP_011902535.1">
    <property type="nucleotide sequence ID" value="NC_009379.1"/>
</dbReference>
<dbReference type="SMR" id="A4SWP6"/>
<dbReference type="GeneID" id="31481051"/>
<dbReference type="KEGG" id="pnu:Pnuc_0692"/>
<dbReference type="eggNOG" id="COG0172">
    <property type="taxonomic scope" value="Bacteria"/>
</dbReference>
<dbReference type="HOGENOM" id="CLU_023797_1_1_4"/>
<dbReference type="UniPathway" id="UPA00906">
    <property type="reaction ID" value="UER00895"/>
</dbReference>
<dbReference type="Proteomes" id="UP000000231">
    <property type="component" value="Chromosome"/>
</dbReference>
<dbReference type="GO" id="GO:0005737">
    <property type="term" value="C:cytoplasm"/>
    <property type="evidence" value="ECO:0007669"/>
    <property type="project" value="UniProtKB-SubCell"/>
</dbReference>
<dbReference type="GO" id="GO:0005524">
    <property type="term" value="F:ATP binding"/>
    <property type="evidence" value="ECO:0007669"/>
    <property type="project" value="UniProtKB-UniRule"/>
</dbReference>
<dbReference type="GO" id="GO:0004828">
    <property type="term" value="F:serine-tRNA ligase activity"/>
    <property type="evidence" value="ECO:0007669"/>
    <property type="project" value="UniProtKB-UniRule"/>
</dbReference>
<dbReference type="GO" id="GO:0016260">
    <property type="term" value="P:selenocysteine biosynthetic process"/>
    <property type="evidence" value="ECO:0007669"/>
    <property type="project" value="UniProtKB-UniRule"/>
</dbReference>
<dbReference type="GO" id="GO:0006434">
    <property type="term" value="P:seryl-tRNA aminoacylation"/>
    <property type="evidence" value="ECO:0007669"/>
    <property type="project" value="UniProtKB-UniRule"/>
</dbReference>
<dbReference type="CDD" id="cd00770">
    <property type="entry name" value="SerRS_core"/>
    <property type="match status" value="1"/>
</dbReference>
<dbReference type="Gene3D" id="3.30.930.10">
    <property type="entry name" value="Bira Bifunctional Protein, Domain 2"/>
    <property type="match status" value="1"/>
</dbReference>
<dbReference type="Gene3D" id="1.10.287.40">
    <property type="entry name" value="Serine-tRNA synthetase, tRNA binding domain"/>
    <property type="match status" value="1"/>
</dbReference>
<dbReference type="HAMAP" id="MF_00176">
    <property type="entry name" value="Ser_tRNA_synth_type1"/>
    <property type="match status" value="1"/>
</dbReference>
<dbReference type="InterPro" id="IPR002314">
    <property type="entry name" value="aa-tRNA-synt_IIb"/>
</dbReference>
<dbReference type="InterPro" id="IPR006195">
    <property type="entry name" value="aa-tRNA-synth_II"/>
</dbReference>
<dbReference type="InterPro" id="IPR045864">
    <property type="entry name" value="aa-tRNA-synth_II/BPL/LPL"/>
</dbReference>
<dbReference type="InterPro" id="IPR002317">
    <property type="entry name" value="Ser-tRNA-ligase_type_1"/>
</dbReference>
<dbReference type="InterPro" id="IPR015866">
    <property type="entry name" value="Ser-tRNA-synth_1_N"/>
</dbReference>
<dbReference type="InterPro" id="IPR042103">
    <property type="entry name" value="SerRS_1_N_sf"/>
</dbReference>
<dbReference type="InterPro" id="IPR033729">
    <property type="entry name" value="SerRS_core"/>
</dbReference>
<dbReference type="InterPro" id="IPR010978">
    <property type="entry name" value="tRNA-bd_arm"/>
</dbReference>
<dbReference type="NCBIfam" id="TIGR00414">
    <property type="entry name" value="serS"/>
    <property type="match status" value="1"/>
</dbReference>
<dbReference type="PANTHER" id="PTHR43697:SF1">
    <property type="entry name" value="SERINE--TRNA LIGASE"/>
    <property type="match status" value="1"/>
</dbReference>
<dbReference type="PANTHER" id="PTHR43697">
    <property type="entry name" value="SERYL-TRNA SYNTHETASE"/>
    <property type="match status" value="1"/>
</dbReference>
<dbReference type="Pfam" id="PF02403">
    <property type="entry name" value="Seryl_tRNA_N"/>
    <property type="match status" value="1"/>
</dbReference>
<dbReference type="Pfam" id="PF00587">
    <property type="entry name" value="tRNA-synt_2b"/>
    <property type="match status" value="1"/>
</dbReference>
<dbReference type="PIRSF" id="PIRSF001529">
    <property type="entry name" value="Ser-tRNA-synth_IIa"/>
    <property type="match status" value="1"/>
</dbReference>
<dbReference type="PRINTS" id="PR00981">
    <property type="entry name" value="TRNASYNTHSER"/>
</dbReference>
<dbReference type="SUPFAM" id="SSF55681">
    <property type="entry name" value="Class II aaRS and biotin synthetases"/>
    <property type="match status" value="1"/>
</dbReference>
<dbReference type="SUPFAM" id="SSF46589">
    <property type="entry name" value="tRNA-binding arm"/>
    <property type="match status" value="1"/>
</dbReference>
<dbReference type="PROSITE" id="PS50862">
    <property type="entry name" value="AA_TRNA_LIGASE_II"/>
    <property type="match status" value="1"/>
</dbReference>
<name>SYS_POLAQ</name>
<organism>
    <name type="scientific">Polynucleobacter asymbioticus (strain DSM 18221 / CIP 109841 / QLW-P1DMWA-1)</name>
    <name type="common">Polynucleobacter necessarius subsp. asymbioticus</name>
    <dbReference type="NCBI Taxonomy" id="312153"/>
    <lineage>
        <taxon>Bacteria</taxon>
        <taxon>Pseudomonadati</taxon>
        <taxon>Pseudomonadota</taxon>
        <taxon>Betaproteobacteria</taxon>
        <taxon>Burkholderiales</taxon>
        <taxon>Burkholderiaceae</taxon>
        <taxon>Polynucleobacter</taxon>
    </lineage>
</organism>
<feature type="chain" id="PRO_1000077206" description="Serine--tRNA ligase">
    <location>
        <begin position="1"/>
        <end position="436"/>
    </location>
</feature>
<feature type="binding site" evidence="1">
    <location>
        <begin position="242"/>
        <end position="244"/>
    </location>
    <ligand>
        <name>L-serine</name>
        <dbReference type="ChEBI" id="CHEBI:33384"/>
    </ligand>
</feature>
<feature type="binding site" evidence="1">
    <location>
        <begin position="273"/>
        <end position="275"/>
    </location>
    <ligand>
        <name>ATP</name>
        <dbReference type="ChEBI" id="CHEBI:30616"/>
    </ligand>
</feature>
<feature type="binding site" evidence="1">
    <location>
        <position position="296"/>
    </location>
    <ligand>
        <name>L-serine</name>
        <dbReference type="ChEBI" id="CHEBI:33384"/>
    </ligand>
</feature>
<feature type="binding site" evidence="1">
    <location>
        <begin position="360"/>
        <end position="363"/>
    </location>
    <ligand>
        <name>ATP</name>
        <dbReference type="ChEBI" id="CHEBI:30616"/>
    </ligand>
</feature>
<feature type="binding site" evidence="1">
    <location>
        <position position="395"/>
    </location>
    <ligand>
        <name>L-serine</name>
        <dbReference type="ChEBI" id="CHEBI:33384"/>
    </ligand>
</feature>
<gene>
    <name evidence="1" type="primary">serS</name>
    <name type="ordered locus">Pnuc_0692</name>
</gene>
<sequence>MIDPQLLRKDIAAVQARLATRKFQLDVEKFNTLESERKSLQTRTEELQAKRNQLAKAIGMKKGKGEDAAAEMAEASQINVDMESGAARLSVLQAEIADFLMGIPNLPDESVPAGKDETENKEVKVWGEQPMFDFEIKDHVDLGGPLGLDFEVAAKISGSRFVVLKGPIARLHRALAQFMIDTHATHHGYQEVYAPYMVNAASMRGTGQLPKFEEDLFKVPRQMGGEDEGGEAKTENFYLIPTAEVPVTNLVRDEIVNADTLPLKFVAHTPCFRSEAGSYGRDVRGMIRQHQFDKVELVQITKPEHSMQALEELTGHAERILELLELPYRKVLLCTGDMGFGSTKTYDLEVWVPSQNAYREISSCSSMGDFQARRMQARFKAGQGKPELLHTLNGSGLAVGRALVALIENKQLVDGSIAIPKALQPYLGGLETLKPN</sequence>
<evidence type="ECO:0000255" key="1">
    <source>
        <dbReference type="HAMAP-Rule" id="MF_00176"/>
    </source>
</evidence>
<accession>A4SWP6</accession>
<proteinExistence type="inferred from homology"/>